<gene>
    <name evidence="1" type="primary">glnD</name>
    <name type="ordered locus">Bcen_6056</name>
</gene>
<sequence length="858" mass="96896">MSAHAAPSPEALSRRAEFKAAKTEMLERFRHAANVASLMHALSKLTDDALKRVWDECGLPATLALVAVGGYGRGELAPYSDVDILVLLPDAHDAALDARIERFIGMAWDLGLEIGSSVRTVAQCIEEASQDVTVQTSLLEARRIVGSTALFERFTVRYHEALDARAFFTAKVLEMRQRHAKFQDTPYSLEPNVKESPGGLRDLQTILWIARAAGFGSSWRELDTRGLITDREARELRRNEGFLKTLRARLHVIAGRRQDMLVFDLQTQAAESFGYQPTQAKRASEQLMRRYYWAAKAVTQLATILIQNIEAQLFPATSGITRVLSADRFVEKQGMLEIVDDGVFERHPDAILEAFLLYETTRGVKGLSARTLRALYNSREIMNNAWRRDPQNRATFMRILQQPEGITHAFRLMNQTSVLGRYLLNFRRIVGQMQHDLYHVYTVDQHILMVLRNIRRFAVAEHAHEYPFCSQLIGNFERPWVLYVAALFHDIAKGRGGDHSTLGMADARRFCREHGIAGDDAALIVWLVQHHLTMSQVAQKQDTSDPEVIKRFAEVVGNERYLTALYLLTVADIRGTSPKVWNTWKGKLLEDLYRITLAVLGGANPDAHSELKSRQEQALALLRLETVPDDAHRALWDQLDVGFFLRHDAADIAWQTRVLYRHVNAETAIVRARPSPIGDALQVLVYVKDRPDLFAGICAYFDRNGLSVLDARVSTTRHGYALDNFIVTQTERDVRYRDIANLVEQQLATRLAETASLPEPSKGRLSRLSRTFPITPRVDLRADERGQYYILSVSANDRPGLLYSIARVLAEHRIGVHAARINTLGERVEDIFLLAGAGLSDNRLQIQLETELLRAIAV</sequence>
<reference key="1">
    <citation type="submission" date="2006-05" db="EMBL/GenBank/DDBJ databases">
        <title>Complete sequence of chromosome 3 of Burkholderia cenocepacia AU 1054.</title>
        <authorList>
            <consortium name="US DOE Joint Genome Institute"/>
            <person name="Copeland A."/>
            <person name="Lucas S."/>
            <person name="Lapidus A."/>
            <person name="Barry K."/>
            <person name="Detter J.C."/>
            <person name="Glavina del Rio T."/>
            <person name="Hammon N."/>
            <person name="Israni S."/>
            <person name="Dalin E."/>
            <person name="Tice H."/>
            <person name="Pitluck S."/>
            <person name="Chain P."/>
            <person name="Malfatti S."/>
            <person name="Shin M."/>
            <person name="Vergez L."/>
            <person name="Schmutz J."/>
            <person name="Larimer F."/>
            <person name="Land M."/>
            <person name="Hauser L."/>
            <person name="Kyrpides N."/>
            <person name="Lykidis A."/>
            <person name="LiPuma J.J."/>
            <person name="Konstantinidis K."/>
            <person name="Tiedje J.M."/>
            <person name="Richardson P."/>
        </authorList>
    </citation>
    <scope>NUCLEOTIDE SEQUENCE [LARGE SCALE GENOMIC DNA]</scope>
    <source>
        <strain>AU 1054</strain>
    </source>
</reference>
<proteinExistence type="inferred from homology"/>
<evidence type="ECO:0000255" key="1">
    <source>
        <dbReference type="HAMAP-Rule" id="MF_00277"/>
    </source>
</evidence>
<evidence type="ECO:0000255" key="2">
    <source>
        <dbReference type="PROSITE-ProRule" id="PRU01175"/>
    </source>
</evidence>
<comment type="function">
    <text evidence="1">Modifies, by uridylylation and deuridylylation, the PII regulatory proteins (GlnB and homologs), in response to the nitrogen status of the cell that GlnD senses through the glutamine level. Under low glutamine levels, catalyzes the conversion of the PII proteins and UTP to PII-UMP and PPi, while under higher glutamine levels, GlnD hydrolyzes PII-UMP to PII and UMP (deuridylylation). Thus, controls uridylylation state and activity of the PII proteins, and plays an important role in the regulation of nitrogen assimilation and metabolism.</text>
</comment>
<comment type="catalytic activity">
    <reaction evidence="1">
        <text>[protein-PII]-L-tyrosine + UTP = [protein-PII]-uridylyl-L-tyrosine + diphosphate</text>
        <dbReference type="Rhea" id="RHEA:13673"/>
        <dbReference type="Rhea" id="RHEA-COMP:12147"/>
        <dbReference type="Rhea" id="RHEA-COMP:12148"/>
        <dbReference type="ChEBI" id="CHEBI:33019"/>
        <dbReference type="ChEBI" id="CHEBI:46398"/>
        <dbReference type="ChEBI" id="CHEBI:46858"/>
        <dbReference type="ChEBI" id="CHEBI:90602"/>
        <dbReference type="EC" id="2.7.7.59"/>
    </reaction>
</comment>
<comment type="catalytic activity">
    <reaction evidence="1">
        <text>[protein-PII]-uridylyl-L-tyrosine + H2O = [protein-PII]-L-tyrosine + UMP + H(+)</text>
        <dbReference type="Rhea" id="RHEA:48600"/>
        <dbReference type="Rhea" id="RHEA-COMP:12147"/>
        <dbReference type="Rhea" id="RHEA-COMP:12148"/>
        <dbReference type="ChEBI" id="CHEBI:15377"/>
        <dbReference type="ChEBI" id="CHEBI:15378"/>
        <dbReference type="ChEBI" id="CHEBI:46858"/>
        <dbReference type="ChEBI" id="CHEBI:57865"/>
        <dbReference type="ChEBI" id="CHEBI:90602"/>
    </reaction>
</comment>
<comment type="cofactor">
    <cofactor evidence="1">
        <name>Mg(2+)</name>
        <dbReference type="ChEBI" id="CHEBI:18420"/>
    </cofactor>
</comment>
<comment type="activity regulation">
    <text evidence="1">Uridylyltransferase (UTase) activity is inhibited by glutamine, while glutamine activates uridylyl-removing (UR) activity.</text>
</comment>
<comment type="domain">
    <text evidence="1">Has four distinct domains: an N-terminal nucleotidyltransferase (NT) domain responsible for UTase activity, a central HD domain that encodes UR activity, and two C-terminal ACT domains that seem to have a role in glutamine sensing.</text>
</comment>
<comment type="similarity">
    <text evidence="1">Belongs to the GlnD family.</text>
</comment>
<protein>
    <recommendedName>
        <fullName evidence="1">Bifunctional uridylyltransferase/uridylyl-removing enzyme</fullName>
        <shortName evidence="1">UTase/UR</shortName>
    </recommendedName>
    <alternativeName>
        <fullName evidence="1">Bifunctional [protein-PII] modification enzyme</fullName>
    </alternativeName>
    <alternativeName>
        <fullName evidence="1">Bifunctional nitrogen sensor protein</fullName>
    </alternativeName>
    <domain>
        <recommendedName>
            <fullName evidence="1">[Protein-PII] uridylyltransferase</fullName>
            <shortName evidence="1">PII uridylyltransferase</shortName>
            <shortName evidence="1">UTase</shortName>
            <ecNumber evidence="1">2.7.7.59</ecNumber>
        </recommendedName>
    </domain>
    <domain>
        <recommendedName>
            <fullName evidence="1">[Protein-PII]-UMP uridylyl-removing enzyme</fullName>
            <shortName evidence="1">UR</shortName>
            <ecNumber evidence="1">3.1.4.-</ecNumber>
        </recommendedName>
    </domain>
</protein>
<accession>Q1BHI4</accession>
<keyword id="KW-0378">Hydrolase</keyword>
<keyword id="KW-0460">Magnesium</keyword>
<keyword id="KW-0511">Multifunctional enzyme</keyword>
<keyword id="KW-0548">Nucleotidyltransferase</keyword>
<keyword id="KW-0677">Repeat</keyword>
<keyword id="KW-0808">Transferase</keyword>
<organism>
    <name type="scientific">Burkholderia orbicola (strain AU 1054)</name>
    <dbReference type="NCBI Taxonomy" id="331271"/>
    <lineage>
        <taxon>Bacteria</taxon>
        <taxon>Pseudomonadati</taxon>
        <taxon>Pseudomonadota</taxon>
        <taxon>Betaproteobacteria</taxon>
        <taxon>Burkholderiales</taxon>
        <taxon>Burkholderiaceae</taxon>
        <taxon>Burkholderia</taxon>
        <taxon>Burkholderia cepacia complex</taxon>
        <taxon>Burkholderia orbicola</taxon>
    </lineage>
</organism>
<feature type="chain" id="PRO_1000022330" description="Bifunctional uridylyltransferase/uridylyl-removing enzyme">
    <location>
        <begin position="1"/>
        <end position="858"/>
    </location>
</feature>
<feature type="domain" description="HD" evidence="2">
    <location>
        <begin position="443"/>
        <end position="565"/>
    </location>
</feature>
<feature type="domain" description="ACT 1" evidence="1">
    <location>
        <begin position="682"/>
        <end position="763"/>
    </location>
</feature>
<feature type="domain" description="ACT 2" evidence="1">
    <location>
        <begin position="790"/>
        <end position="858"/>
    </location>
</feature>
<feature type="region of interest" description="Uridylyltransferase">
    <location>
        <begin position="1"/>
        <end position="324"/>
    </location>
</feature>
<feature type="region of interest" description="Uridylyl-removing">
    <location>
        <begin position="325"/>
        <end position="681"/>
    </location>
</feature>
<name>GLND_BURO1</name>
<dbReference type="EC" id="2.7.7.59" evidence="1"/>
<dbReference type="EC" id="3.1.4.-" evidence="1"/>
<dbReference type="EMBL" id="CP000380">
    <property type="protein sequence ID" value="ABF80921.1"/>
    <property type="molecule type" value="Genomic_DNA"/>
</dbReference>
<dbReference type="SMR" id="Q1BHI4"/>
<dbReference type="HOGENOM" id="CLU_012833_0_0_4"/>
<dbReference type="GO" id="GO:0008773">
    <property type="term" value="F:[protein-PII] uridylyltransferase activity"/>
    <property type="evidence" value="ECO:0007669"/>
    <property type="project" value="UniProtKB-UniRule"/>
</dbReference>
<dbReference type="GO" id="GO:0008081">
    <property type="term" value="F:phosphoric diester hydrolase activity"/>
    <property type="evidence" value="ECO:0007669"/>
    <property type="project" value="UniProtKB-UniRule"/>
</dbReference>
<dbReference type="GO" id="GO:0006808">
    <property type="term" value="P:regulation of nitrogen utilization"/>
    <property type="evidence" value="ECO:0007669"/>
    <property type="project" value="UniProtKB-UniRule"/>
</dbReference>
<dbReference type="CDD" id="cd04899">
    <property type="entry name" value="ACT_ACR-UUR-like_2"/>
    <property type="match status" value="1"/>
</dbReference>
<dbReference type="CDD" id="cd04900">
    <property type="entry name" value="ACT_UUR-like_1"/>
    <property type="match status" value="1"/>
</dbReference>
<dbReference type="CDD" id="cd00077">
    <property type="entry name" value="HDc"/>
    <property type="match status" value="1"/>
</dbReference>
<dbReference type="CDD" id="cd05401">
    <property type="entry name" value="NT_GlnE_GlnD_like"/>
    <property type="match status" value="1"/>
</dbReference>
<dbReference type="Gene3D" id="3.30.70.260">
    <property type="match status" value="1"/>
</dbReference>
<dbReference type="Gene3D" id="1.10.3210.10">
    <property type="entry name" value="Hypothetical protein af1432"/>
    <property type="match status" value="1"/>
</dbReference>
<dbReference type="Gene3D" id="1.20.120.330">
    <property type="entry name" value="Nucleotidyltransferases domain 2"/>
    <property type="match status" value="1"/>
</dbReference>
<dbReference type="HAMAP" id="MF_00277">
    <property type="entry name" value="PII_uridylyl_transf"/>
    <property type="match status" value="1"/>
</dbReference>
<dbReference type="InterPro" id="IPR045865">
    <property type="entry name" value="ACT-like_dom_sf"/>
</dbReference>
<dbReference type="InterPro" id="IPR002912">
    <property type="entry name" value="ACT_dom"/>
</dbReference>
<dbReference type="InterPro" id="IPR003607">
    <property type="entry name" value="HD/PDEase_dom"/>
</dbReference>
<dbReference type="InterPro" id="IPR006674">
    <property type="entry name" value="HD_domain"/>
</dbReference>
<dbReference type="InterPro" id="IPR043519">
    <property type="entry name" value="NT_sf"/>
</dbReference>
<dbReference type="InterPro" id="IPR013546">
    <property type="entry name" value="PII_UdlTrfase/GS_AdlTrfase"/>
</dbReference>
<dbReference type="InterPro" id="IPR002934">
    <property type="entry name" value="Polymerase_NTP_transf_dom"/>
</dbReference>
<dbReference type="InterPro" id="IPR010043">
    <property type="entry name" value="UTase/UR"/>
</dbReference>
<dbReference type="NCBIfam" id="NF002837">
    <property type="entry name" value="PRK03059.1"/>
    <property type="match status" value="1"/>
</dbReference>
<dbReference type="NCBIfam" id="TIGR01693">
    <property type="entry name" value="UTase_glnD"/>
    <property type="match status" value="1"/>
</dbReference>
<dbReference type="PANTHER" id="PTHR47320">
    <property type="entry name" value="BIFUNCTIONAL URIDYLYLTRANSFERASE/URIDYLYL-REMOVING ENZYME"/>
    <property type="match status" value="1"/>
</dbReference>
<dbReference type="PANTHER" id="PTHR47320:SF1">
    <property type="entry name" value="BIFUNCTIONAL URIDYLYLTRANSFERASE_URIDYLYL-REMOVING ENZYME"/>
    <property type="match status" value="1"/>
</dbReference>
<dbReference type="Pfam" id="PF08335">
    <property type="entry name" value="GlnD_UR_UTase"/>
    <property type="match status" value="1"/>
</dbReference>
<dbReference type="Pfam" id="PF01966">
    <property type="entry name" value="HD"/>
    <property type="match status" value="1"/>
</dbReference>
<dbReference type="Pfam" id="PF01909">
    <property type="entry name" value="NTP_transf_2"/>
    <property type="match status" value="1"/>
</dbReference>
<dbReference type="PIRSF" id="PIRSF006288">
    <property type="entry name" value="PII_uridyltransf"/>
    <property type="match status" value="1"/>
</dbReference>
<dbReference type="SMART" id="SM00471">
    <property type="entry name" value="HDc"/>
    <property type="match status" value="1"/>
</dbReference>
<dbReference type="SUPFAM" id="SSF55021">
    <property type="entry name" value="ACT-like"/>
    <property type="match status" value="2"/>
</dbReference>
<dbReference type="SUPFAM" id="SSF109604">
    <property type="entry name" value="HD-domain/PDEase-like"/>
    <property type="match status" value="1"/>
</dbReference>
<dbReference type="SUPFAM" id="SSF81301">
    <property type="entry name" value="Nucleotidyltransferase"/>
    <property type="match status" value="1"/>
</dbReference>
<dbReference type="SUPFAM" id="SSF81593">
    <property type="entry name" value="Nucleotidyltransferase substrate binding subunit/domain"/>
    <property type="match status" value="1"/>
</dbReference>
<dbReference type="PROSITE" id="PS51671">
    <property type="entry name" value="ACT"/>
    <property type="match status" value="2"/>
</dbReference>
<dbReference type="PROSITE" id="PS51831">
    <property type="entry name" value="HD"/>
    <property type="match status" value="1"/>
</dbReference>